<accession>Q1ME33</accession>
<organism>
    <name type="scientific">Rhizobium johnstonii (strain DSM 114642 / LMG 32736 / 3841)</name>
    <name type="common">Rhizobium leguminosarum bv. viciae</name>
    <dbReference type="NCBI Taxonomy" id="216596"/>
    <lineage>
        <taxon>Bacteria</taxon>
        <taxon>Pseudomonadati</taxon>
        <taxon>Pseudomonadota</taxon>
        <taxon>Alphaproteobacteria</taxon>
        <taxon>Hyphomicrobiales</taxon>
        <taxon>Rhizobiaceae</taxon>
        <taxon>Rhizobium/Agrobacterium group</taxon>
        <taxon>Rhizobium</taxon>
        <taxon>Rhizobium johnstonii</taxon>
    </lineage>
</organism>
<evidence type="ECO:0000255" key="1">
    <source>
        <dbReference type="HAMAP-Rule" id="MF_00033"/>
    </source>
</evidence>
<keyword id="KW-0131">Cell cycle</keyword>
<keyword id="KW-0132">Cell division</keyword>
<keyword id="KW-0997">Cell inner membrane</keyword>
<keyword id="KW-1003">Cell membrane</keyword>
<keyword id="KW-0133">Cell shape</keyword>
<keyword id="KW-0961">Cell wall biogenesis/degradation</keyword>
<keyword id="KW-0328">Glycosyltransferase</keyword>
<keyword id="KW-0472">Membrane</keyword>
<keyword id="KW-0573">Peptidoglycan synthesis</keyword>
<keyword id="KW-0808">Transferase</keyword>
<comment type="function">
    <text evidence="1">Cell wall formation. Catalyzes the transfer of a GlcNAc subunit on undecaprenyl-pyrophosphoryl-MurNAc-pentapeptide (lipid intermediate I) to form undecaprenyl-pyrophosphoryl-MurNAc-(pentapeptide)GlcNAc (lipid intermediate II).</text>
</comment>
<comment type="catalytic activity">
    <reaction evidence="1">
        <text>di-trans,octa-cis-undecaprenyl diphospho-N-acetyl-alpha-D-muramoyl-L-alanyl-D-glutamyl-meso-2,6-diaminopimeloyl-D-alanyl-D-alanine + UDP-N-acetyl-alpha-D-glucosamine = di-trans,octa-cis-undecaprenyl diphospho-[N-acetyl-alpha-D-glucosaminyl-(1-&gt;4)]-N-acetyl-alpha-D-muramoyl-L-alanyl-D-glutamyl-meso-2,6-diaminopimeloyl-D-alanyl-D-alanine + UDP + H(+)</text>
        <dbReference type="Rhea" id="RHEA:31227"/>
        <dbReference type="ChEBI" id="CHEBI:15378"/>
        <dbReference type="ChEBI" id="CHEBI:57705"/>
        <dbReference type="ChEBI" id="CHEBI:58223"/>
        <dbReference type="ChEBI" id="CHEBI:61387"/>
        <dbReference type="ChEBI" id="CHEBI:61388"/>
        <dbReference type="EC" id="2.4.1.227"/>
    </reaction>
</comment>
<comment type="pathway">
    <text evidence="1">Cell wall biogenesis; peptidoglycan biosynthesis.</text>
</comment>
<comment type="subcellular location">
    <subcellularLocation>
        <location evidence="1">Cell inner membrane</location>
        <topology evidence="1">Peripheral membrane protein</topology>
        <orientation evidence="1">Cytoplasmic side</orientation>
    </subcellularLocation>
</comment>
<comment type="similarity">
    <text evidence="1">Belongs to the glycosyltransferase 28 family. MurG subfamily.</text>
</comment>
<feature type="chain" id="PRO_0000315147" description="UDP-N-acetylglucosamine--N-acetylmuramyl-(pentapeptide) pyrophosphoryl-undecaprenol N-acetylglucosamine transferase">
    <location>
        <begin position="1"/>
        <end position="374"/>
    </location>
</feature>
<feature type="binding site" evidence="1">
    <location>
        <begin position="13"/>
        <end position="15"/>
    </location>
    <ligand>
        <name>UDP-N-acetyl-alpha-D-glucosamine</name>
        <dbReference type="ChEBI" id="CHEBI:57705"/>
    </ligand>
</feature>
<feature type="binding site" evidence="1">
    <location>
        <position position="124"/>
    </location>
    <ligand>
        <name>UDP-N-acetyl-alpha-D-glucosamine</name>
        <dbReference type="ChEBI" id="CHEBI:57705"/>
    </ligand>
</feature>
<feature type="binding site" evidence="1">
    <location>
        <position position="165"/>
    </location>
    <ligand>
        <name>UDP-N-acetyl-alpha-D-glucosamine</name>
        <dbReference type="ChEBI" id="CHEBI:57705"/>
    </ligand>
</feature>
<feature type="binding site" evidence="1">
    <location>
        <position position="193"/>
    </location>
    <ligand>
        <name>UDP-N-acetyl-alpha-D-glucosamine</name>
        <dbReference type="ChEBI" id="CHEBI:57705"/>
    </ligand>
</feature>
<feature type="binding site" evidence="1">
    <location>
        <position position="294"/>
    </location>
    <ligand>
        <name>UDP-N-acetyl-alpha-D-glucosamine</name>
        <dbReference type="ChEBI" id="CHEBI:57705"/>
    </ligand>
</feature>
<proteinExistence type="inferred from homology"/>
<name>MURG_RHIJ3</name>
<reference key="1">
    <citation type="journal article" date="2006" name="Genome Biol.">
        <title>The genome of Rhizobium leguminosarum has recognizable core and accessory components.</title>
        <authorList>
            <person name="Young J.P.W."/>
            <person name="Crossman L.C."/>
            <person name="Johnston A.W.B."/>
            <person name="Thomson N.R."/>
            <person name="Ghazoui Z.F."/>
            <person name="Hull K.H."/>
            <person name="Wexler M."/>
            <person name="Curson A.R.J."/>
            <person name="Todd J.D."/>
            <person name="Poole P.S."/>
            <person name="Mauchline T.H."/>
            <person name="East A.K."/>
            <person name="Quail M.A."/>
            <person name="Churcher C."/>
            <person name="Arrowsmith C."/>
            <person name="Cherevach I."/>
            <person name="Chillingworth T."/>
            <person name="Clarke K."/>
            <person name="Cronin A."/>
            <person name="Davis P."/>
            <person name="Fraser A."/>
            <person name="Hance Z."/>
            <person name="Hauser H."/>
            <person name="Jagels K."/>
            <person name="Moule S."/>
            <person name="Mungall K."/>
            <person name="Norbertczak H."/>
            <person name="Rabbinowitsch E."/>
            <person name="Sanders M."/>
            <person name="Simmonds M."/>
            <person name="Whitehead S."/>
            <person name="Parkhill J."/>
        </authorList>
    </citation>
    <scope>NUCLEOTIDE SEQUENCE [LARGE SCALE GENOMIC DNA]</scope>
    <source>
        <strain>DSM 114642 / LMG 32736 / 3841</strain>
    </source>
</reference>
<protein>
    <recommendedName>
        <fullName evidence="1">UDP-N-acetylglucosamine--N-acetylmuramyl-(pentapeptide) pyrophosphoryl-undecaprenol N-acetylglucosamine transferase</fullName>
        <ecNumber evidence="1">2.4.1.227</ecNumber>
    </recommendedName>
    <alternativeName>
        <fullName evidence="1">Undecaprenyl-PP-MurNAc-pentapeptide-UDPGlcNAc GlcNAc transferase</fullName>
    </alternativeName>
</protein>
<gene>
    <name evidence="1" type="primary">murG</name>
    <name type="ordered locus">RL3307</name>
</gene>
<dbReference type="EC" id="2.4.1.227" evidence="1"/>
<dbReference type="EMBL" id="AM236080">
    <property type="protein sequence ID" value="CAK08794.1"/>
    <property type="molecule type" value="Genomic_DNA"/>
</dbReference>
<dbReference type="RefSeq" id="WP_011652797.1">
    <property type="nucleotide sequence ID" value="NC_008380.1"/>
</dbReference>
<dbReference type="SMR" id="Q1ME33"/>
<dbReference type="CAZy" id="GT28">
    <property type="family name" value="Glycosyltransferase Family 28"/>
</dbReference>
<dbReference type="EnsemblBacteria" id="CAK08794">
    <property type="protein sequence ID" value="CAK08794"/>
    <property type="gene ID" value="RL3307"/>
</dbReference>
<dbReference type="KEGG" id="rle:RL3307"/>
<dbReference type="eggNOG" id="COG0707">
    <property type="taxonomic scope" value="Bacteria"/>
</dbReference>
<dbReference type="HOGENOM" id="CLU_037404_2_1_5"/>
<dbReference type="UniPathway" id="UPA00219"/>
<dbReference type="Proteomes" id="UP000006575">
    <property type="component" value="Chromosome"/>
</dbReference>
<dbReference type="GO" id="GO:0005886">
    <property type="term" value="C:plasma membrane"/>
    <property type="evidence" value="ECO:0007669"/>
    <property type="project" value="UniProtKB-SubCell"/>
</dbReference>
<dbReference type="GO" id="GO:0051991">
    <property type="term" value="F:UDP-N-acetyl-D-glucosamine:N-acetylmuramoyl-L-alanyl-D-glutamyl-meso-2,6-diaminopimelyl-D-alanyl-D-alanine-diphosphoundecaprenol 4-beta-N-acetylglucosaminlytransferase activity"/>
    <property type="evidence" value="ECO:0007669"/>
    <property type="project" value="RHEA"/>
</dbReference>
<dbReference type="GO" id="GO:0050511">
    <property type="term" value="F:undecaprenyldiphospho-muramoylpentapeptide beta-N-acetylglucosaminyltransferase activity"/>
    <property type="evidence" value="ECO:0007669"/>
    <property type="project" value="UniProtKB-UniRule"/>
</dbReference>
<dbReference type="GO" id="GO:0005975">
    <property type="term" value="P:carbohydrate metabolic process"/>
    <property type="evidence" value="ECO:0007669"/>
    <property type="project" value="InterPro"/>
</dbReference>
<dbReference type="GO" id="GO:0051301">
    <property type="term" value="P:cell division"/>
    <property type="evidence" value="ECO:0007669"/>
    <property type="project" value="UniProtKB-KW"/>
</dbReference>
<dbReference type="GO" id="GO:0071555">
    <property type="term" value="P:cell wall organization"/>
    <property type="evidence" value="ECO:0007669"/>
    <property type="project" value="UniProtKB-KW"/>
</dbReference>
<dbReference type="GO" id="GO:0030259">
    <property type="term" value="P:lipid glycosylation"/>
    <property type="evidence" value="ECO:0007669"/>
    <property type="project" value="UniProtKB-UniRule"/>
</dbReference>
<dbReference type="GO" id="GO:0009252">
    <property type="term" value="P:peptidoglycan biosynthetic process"/>
    <property type="evidence" value="ECO:0007669"/>
    <property type="project" value="UniProtKB-UniRule"/>
</dbReference>
<dbReference type="GO" id="GO:0008360">
    <property type="term" value="P:regulation of cell shape"/>
    <property type="evidence" value="ECO:0007669"/>
    <property type="project" value="UniProtKB-KW"/>
</dbReference>
<dbReference type="CDD" id="cd03785">
    <property type="entry name" value="GT28_MurG"/>
    <property type="match status" value="1"/>
</dbReference>
<dbReference type="Gene3D" id="3.40.50.2000">
    <property type="entry name" value="Glycogen Phosphorylase B"/>
    <property type="match status" value="2"/>
</dbReference>
<dbReference type="HAMAP" id="MF_00033">
    <property type="entry name" value="MurG"/>
    <property type="match status" value="1"/>
</dbReference>
<dbReference type="InterPro" id="IPR006009">
    <property type="entry name" value="GlcNAc_MurG"/>
</dbReference>
<dbReference type="InterPro" id="IPR007235">
    <property type="entry name" value="Glyco_trans_28_C"/>
</dbReference>
<dbReference type="InterPro" id="IPR004276">
    <property type="entry name" value="GlycoTrans_28_N"/>
</dbReference>
<dbReference type="NCBIfam" id="TIGR01133">
    <property type="entry name" value="murG"/>
    <property type="match status" value="1"/>
</dbReference>
<dbReference type="PANTHER" id="PTHR21015:SF22">
    <property type="entry name" value="GLYCOSYLTRANSFERASE"/>
    <property type="match status" value="1"/>
</dbReference>
<dbReference type="PANTHER" id="PTHR21015">
    <property type="entry name" value="UDP-N-ACETYLGLUCOSAMINE--N-ACETYLMURAMYL-(PENTAPEPTIDE) PYROPHOSPHORYL-UNDECAPRENOL N-ACETYLGLUCOSAMINE TRANSFERASE 1"/>
    <property type="match status" value="1"/>
</dbReference>
<dbReference type="Pfam" id="PF04101">
    <property type="entry name" value="Glyco_tran_28_C"/>
    <property type="match status" value="1"/>
</dbReference>
<dbReference type="Pfam" id="PF03033">
    <property type="entry name" value="Glyco_transf_28"/>
    <property type="match status" value="1"/>
</dbReference>
<dbReference type="SUPFAM" id="SSF53756">
    <property type="entry name" value="UDP-Glycosyltransferase/glycogen phosphorylase"/>
    <property type="match status" value="1"/>
</dbReference>
<sequence length="374" mass="39241">MSKGIVLLAAGGTGGHVFPAEALAFKLKERGYSVHLVTDSRAERYAGKFPAEEIHVVPSATIGSKNPVAVARSLWTLWSGMRAAKKLIQRLQPVIVVGFGGYPTVPPLLAATRLGVPSMIHEQNAVMGRANKALATRVQAIAGGFLPEGGAAFPDKTVTTGNPVRPAIIAAAEVPYTPSHPGEAFNLVVFGGSQGAQYFSKALPTAISLLDDALRVRLRITQQVRPEDMEMVSGCVARLEMGADIAPFFTDMAERLARAHLVICRSGASTVSEISVIGRPAVLVPYPHALDHDQAANAAALAATGGAKVIAQSELSPEKIAAILTAVMNDPEKLSHMAAAAKLAGKPDAANLLADMVEAIAARRTIAEFKRTRA</sequence>